<protein>
    <recommendedName>
        <fullName evidence="2">Large ribosomal subunit protein uL22c</fullName>
    </recommendedName>
    <alternativeName>
        <fullName>50S ribosomal protein L22, chloroplastic</fullName>
    </alternativeName>
</protein>
<feature type="chain" id="PRO_0000276451" description="Large ribosomal subunit protein uL22c">
    <location>
        <begin position="1"/>
        <end position="115"/>
    </location>
</feature>
<dbReference type="EMBL" id="EF067920">
    <property type="protein sequence ID" value="ABK20682.1"/>
    <property type="molecule type" value="Genomic_DNA"/>
</dbReference>
<dbReference type="RefSeq" id="YP_874459.1">
    <property type="nucleotide sequence ID" value="NC_008588.1"/>
</dbReference>
<dbReference type="SMR" id="A0T0I4"/>
<dbReference type="STRING" id="556484.A0T0I4"/>
<dbReference type="GeneID" id="4524661"/>
<dbReference type="InParanoid" id="A0T0I4"/>
<dbReference type="Proteomes" id="UP000000759">
    <property type="component" value="Chloroplast"/>
</dbReference>
<dbReference type="GO" id="GO:0009507">
    <property type="term" value="C:chloroplast"/>
    <property type="evidence" value="ECO:0007669"/>
    <property type="project" value="UniProtKB-SubCell"/>
</dbReference>
<dbReference type="GO" id="GO:0015934">
    <property type="term" value="C:large ribosomal subunit"/>
    <property type="evidence" value="ECO:0007669"/>
    <property type="project" value="InterPro"/>
</dbReference>
<dbReference type="GO" id="GO:0019843">
    <property type="term" value="F:rRNA binding"/>
    <property type="evidence" value="ECO:0007669"/>
    <property type="project" value="UniProtKB-UniRule"/>
</dbReference>
<dbReference type="GO" id="GO:0003735">
    <property type="term" value="F:structural constituent of ribosome"/>
    <property type="evidence" value="ECO:0007669"/>
    <property type="project" value="InterPro"/>
</dbReference>
<dbReference type="GO" id="GO:0006412">
    <property type="term" value="P:translation"/>
    <property type="evidence" value="ECO:0007669"/>
    <property type="project" value="UniProtKB-UniRule"/>
</dbReference>
<dbReference type="CDD" id="cd00336">
    <property type="entry name" value="Ribosomal_L22"/>
    <property type="match status" value="1"/>
</dbReference>
<dbReference type="FunFam" id="3.90.470.10:FF:000004">
    <property type="entry name" value="50S ribosomal protein L22, chloroplastic"/>
    <property type="match status" value="1"/>
</dbReference>
<dbReference type="Gene3D" id="3.90.470.10">
    <property type="entry name" value="Ribosomal protein L22/L17"/>
    <property type="match status" value="1"/>
</dbReference>
<dbReference type="HAMAP" id="MF_01331_B">
    <property type="entry name" value="Ribosomal_uL22_B"/>
    <property type="match status" value="1"/>
</dbReference>
<dbReference type="InterPro" id="IPR001063">
    <property type="entry name" value="Ribosomal_uL22"/>
</dbReference>
<dbReference type="InterPro" id="IPR005727">
    <property type="entry name" value="Ribosomal_uL22_bac/chlpt-type"/>
</dbReference>
<dbReference type="InterPro" id="IPR047867">
    <property type="entry name" value="Ribosomal_uL22_bac/org-type"/>
</dbReference>
<dbReference type="InterPro" id="IPR018260">
    <property type="entry name" value="Ribosomal_uL22_CS"/>
</dbReference>
<dbReference type="InterPro" id="IPR036394">
    <property type="entry name" value="Ribosomal_uL22_sf"/>
</dbReference>
<dbReference type="NCBIfam" id="TIGR01044">
    <property type="entry name" value="rplV_bact"/>
    <property type="match status" value="1"/>
</dbReference>
<dbReference type="PANTHER" id="PTHR13501">
    <property type="entry name" value="CHLOROPLAST 50S RIBOSOMAL PROTEIN L22-RELATED"/>
    <property type="match status" value="1"/>
</dbReference>
<dbReference type="PANTHER" id="PTHR13501:SF10">
    <property type="entry name" value="LARGE RIBOSOMAL SUBUNIT PROTEIN UL22M"/>
    <property type="match status" value="1"/>
</dbReference>
<dbReference type="Pfam" id="PF00237">
    <property type="entry name" value="Ribosomal_L22"/>
    <property type="match status" value="1"/>
</dbReference>
<dbReference type="SUPFAM" id="SSF54843">
    <property type="entry name" value="Ribosomal protein L22"/>
    <property type="match status" value="1"/>
</dbReference>
<dbReference type="PROSITE" id="PS00464">
    <property type="entry name" value="RIBOSOMAL_L22"/>
    <property type="match status" value="1"/>
</dbReference>
<organism>
    <name type="scientific">Phaeodactylum tricornutum (strain CCAP 1055/1)</name>
    <dbReference type="NCBI Taxonomy" id="556484"/>
    <lineage>
        <taxon>Eukaryota</taxon>
        <taxon>Sar</taxon>
        <taxon>Stramenopiles</taxon>
        <taxon>Ochrophyta</taxon>
        <taxon>Bacillariophyta</taxon>
        <taxon>Bacillariophyceae</taxon>
        <taxon>Bacillariophycidae</taxon>
        <taxon>Naviculales</taxon>
        <taxon>Phaeodactylaceae</taxon>
        <taxon>Phaeodactylum</taxon>
    </lineage>
</organism>
<accession>A0T0I4</accession>
<geneLocation type="chloroplast"/>
<reference key="1">
    <citation type="journal article" date="2007" name="Mol. Genet. Genomics">
        <title>Chloroplast genomes of the diatoms Phaeodactylum tricornutum and Thalassiosira pseudonana: comparison with other plastid genomes of the red lineage.</title>
        <authorList>
            <person name="Oudot-Le Secq M.-P."/>
            <person name="Grimwood J."/>
            <person name="Shapiro H."/>
            <person name="Armbrust E.V."/>
            <person name="Bowler C."/>
            <person name="Green B.R."/>
        </authorList>
    </citation>
    <scope>NUCLEOTIDE SEQUENCE [LARGE SCALE GENOMIC DNA]</scope>
    <source>
        <strain>CCAP 1055/1</strain>
    </source>
</reference>
<comment type="function">
    <text evidence="1">This protein binds specifically to 23S rRNA.</text>
</comment>
<comment type="function">
    <text evidence="1">The globular domain of the protein is located near the polypeptide exit tunnel on the outside of the subunit, while an extended beta-hairpin is found that lines the wall of the exit tunnel in the center of the 70S ribosome.</text>
</comment>
<comment type="subunit">
    <text evidence="1">Part of the 50S ribosomal subunit.</text>
</comment>
<comment type="subcellular location">
    <subcellularLocation>
        <location>Plastid</location>
        <location>Chloroplast</location>
    </subcellularLocation>
</comment>
<comment type="similarity">
    <text evidence="2">Belongs to the universal ribosomal protein uL22 family.</text>
</comment>
<gene>
    <name type="primary">rpl22</name>
</gene>
<sequence length="115" mass="12994">MSNTQSVTAVAKYIRMSPHKIRRVLDQIRGRSYQEALMILEFLPYDAGGPIWQVIHSAAANAKHNSGLDKKKLIIDKVFADEGPKLKRIRPRAQGRAYKILKPTCHITVVMKAID</sequence>
<proteinExistence type="inferred from homology"/>
<keyword id="KW-0150">Chloroplast</keyword>
<keyword id="KW-0934">Plastid</keyword>
<keyword id="KW-1185">Reference proteome</keyword>
<keyword id="KW-0687">Ribonucleoprotein</keyword>
<keyword id="KW-0689">Ribosomal protein</keyword>
<keyword id="KW-0694">RNA-binding</keyword>
<keyword id="KW-0699">rRNA-binding</keyword>
<name>RK22_PHATC</name>
<evidence type="ECO:0000250" key="1"/>
<evidence type="ECO:0000305" key="2"/>